<protein>
    <recommendedName>
        <fullName evidence="1">DNA mismatch repair protein MutS</fullName>
    </recommendedName>
</protein>
<gene>
    <name evidence="1" type="primary">mutS</name>
    <name type="ordered locus">Fjoh_1723</name>
</gene>
<feature type="chain" id="PRO_0000335153" description="DNA mismatch repair protein MutS">
    <location>
        <begin position="1"/>
        <end position="868"/>
    </location>
</feature>
<feature type="binding site" evidence="1">
    <location>
        <begin position="620"/>
        <end position="627"/>
    </location>
    <ligand>
        <name>ATP</name>
        <dbReference type="ChEBI" id="CHEBI:30616"/>
    </ligand>
</feature>
<comment type="function">
    <text evidence="1">This protein is involved in the repair of mismatches in DNA. It is possible that it carries out the mismatch recognition step. This protein has a weak ATPase activity.</text>
</comment>
<comment type="similarity">
    <text evidence="1">Belongs to the DNA mismatch repair MutS family.</text>
</comment>
<comment type="sequence caution" evidence="2">
    <conflict type="erroneous initiation">
        <sequence resource="EMBL-CDS" id="ABQ04755"/>
    </conflict>
</comment>
<proteinExistence type="inferred from homology"/>
<dbReference type="EMBL" id="CP000685">
    <property type="protein sequence ID" value="ABQ04755.1"/>
    <property type="status" value="ALT_INIT"/>
    <property type="molecule type" value="Genomic_DNA"/>
</dbReference>
<dbReference type="RefSeq" id="WP_044047604.1">
    <property type="nucleotide sequence ID" value="NC_009441.1"/>
</dbReference>
<dbReference type="SMR" id="A5FJ63"/>
<dbReference type="STRING" id="376686.Fjoh_1723"/>
<dbReference type="KEGG" id="fjo:Fjoh_1723"/>
<dbReference type="eggNOG" id="COG0249">
    <property type="taxonomic scope" value="Bacteria"/>
</dbReference>
<dbReference type="HOGENOM" id="CLU_002472_3_1_10"/>
<dbReference type="Proteomes" id="UP000006694">
    <property type="component" value="Chromosome"/>
</dbReference>
<dbReference type="GO" id="GO:0005829">
    <property type="term" value="C:cytosol"/>
    <property type="evidence" value="ECO:0007669"/>
    <property type="project" value="TreeGrafter"/>
</dbReference>
<dbReference type="GO" id="GO:0005524">
    <property type="term" value="F:ATP binding"/>
    <property type="evidence" value="ECO:0007669"/>
    <property type="project" value="UniProtKB-UniRule"/>
</dbReference>
<dbReference type="GO" id="GO:0140664">
    <property type="term" value="F:ATP-dependent DNA damage sensor activity"/>
    <property type="evidence" value="ECO:0007669"/>
    <property type="project" value="InterPro"/>
</dbReference>
<dbReference type="GO" id="GO:0003684">
    <property type="term" value="F:damaged DNA binding"/>
    <property type="evidence" value="ECO:0007669"/>
    <property type="project" value="UniProtKB-UniRule"/>
</dbReference>
<dbReference type="GO" id="GO:0030983">
    <property type="term" value="F:mismatched DNA binding"/>
    <property type="evidence" value="ECO:0007669"/>
    <property type="project" value="InterPro"/>
</dbReference>
<dbReference type="GO" id="GO:0006298">
    <property type="term" value="P:mismatch repair"/>
    <property type="evidence" value="ECO:0007669"/>
    <property type="project" value="UniProtKB-UniRule"/>
</dbReference>
<dbReference type="CDD" id="cd03284">
    <property type="entry name" value="ABC_MutS1"/>
    <property type="match status" value="1"/>
</dbReference>
<dbReference type="FunFam" id="3.40.1170.10:FF:000001">
    <property type="entry name" value="DNA mismatch repair protein MutS"/>
    <property type="match status" value="1"/>
</dbReference>
<dbReference type="FunFam" id="3.40.50.300:FF:000870">
    <property type="entry name" value="MutS protein homolog 4"/>
    <property type="match status" value="1"/>
</dbReference>
<dbReference type="Gene3D" id="1.10.1420.10">
    <property type="match status" value="2"/>
</dbReference>
<dbReference type="Gene3D" id="3.40.1170.10">
    <property type="entry name" value="DNA repair protein MutS, domain I"/>
    <property type="match status" value="1"/>
</dbReference>
<dbReference type="Gene3D" id="3.30.420.110">
    <property type="entry name" value="MutS, connector domain"/>
    <property type="match status" value="1"/>
</dbReference>
<dbReference type="Gene3D" id="3.40.50.300">
    <property type="entry name" value="P-loop containing nucleotide triphosphate hydrolases"/>
    <property type="match status" value="1"/>
</dbReference>
<dbReference type="HAMAP" id="MF_00096">
    <property type="entry name" value="MutS"/>
    <property type="match status" value="1"/>
</dbReference>
<dbReference type="InterPro" id="IPR005748">
    <property type="entry name" value="DNA_mismatch_repair_MutS"/>
</dbReference>
<dbReference type="InterPro" id="IPR007695">
    <property type="entry name" value="DNA_mismatch_repair_MutS-lik_N"/>
</dbReference>
<dbReference type="InterPro" id="IPR017261">
    <property type="entry name" value="DNA_mismatch_repair_MutS/MSH"/>
</dbReference>
<dbReference type="InterPro" id="IPR000432">
    <property type="entry name" value="DNA_mismatch_repair_MutS_C"/>
</dbReference>
<dbReference type="InterPro" id="IPR007861">
    <property type="entry name" value="DNA_mismatch_repair_MutS_clamp"/>
</dbReference>
<dbReference type="InterPro" id="IPR007696">
    <property type="entry name" value="DNA_mismatch_repair_MutS_core"/>
</dbReference>
<dbReference type="InterPro" id="IPR016151">
    <property type="entry name" value="DNA_mismatch_repair_MutS_N"/>
</dbReference>
<dbReference type="InterPro" id="IPR036187">
    <property type="entry name" value="DNA_mismatch_repair_MutS_sf"/>
</dbReference>
<dbReference type="InterPro" id="IPR007860">
    <property type="entry name" value="DNA_mmatch_repair_MutS_con_dom"/>
</dbReference>
<dbReference type="InterPro" id="IPR045076">
    <property type="entry name" value="MutS"/>
</dbReference>
<dbReference type="InterPro" id="IPR036678">
    <property type="entry name" value="MutS_con_dom_sf"/>
</dbReference>
<dbReference type="InterPro" id="IPR027417">
    <property type="entry name" value="P-loop_NTPase"/>
</dbReference>
<dbReference type="NCBIfam" id="TIGR01070">
    <property type="entry name" value="mutS1"/>
    <property type="match status" value="1"/>
</dbReference>
<dbReference type="NCBIfam" id="NF003810">
    <property type="entry name" value="PRK05399.1"/>
    <property type="match status" value="1"/>
</dbReference>
<dbReference type="PANTHER" id="PTHR11361:SF34">
    <property type="entry name" value="DNA MISMATCH REPAIR PROTEIN MSH1, MITOCHONDRIAL"/>
    <property type="match status" value="1"/>
</dbReference>
<dbReference type="PANTHER" id="PTHR11361">
    <property type="entry name" value="DNA MISMATCH REPAIR PROTEIN MUTS FAMILY MEMBER"/>
    <property type="match status" value="1"/>
</dbReference>
<dbReference type="Pfam" id="PF01624">
    <property type="entry name" value="MutS_I"/>
    <property type="match status" value="1"/>
</dbReference>
<dbReference type="Pfam" id="PF05188">
    <property type="entry name" value="MutS_II"/>
    <property type="match status" value="1"/>
</dbReference>
<dbReference type="Pfam" id="PF05192">
    <property type="entry name" value="MutS_III"/>
    <property type="match status" value="1"/>
</dbReference>
<dbReference type="Pfam" id="PF05190">
    <property type="entry name" value="MutS_IV"/>
    <property type="match status" value="1"/>
</dbReference>
<dbReference type="Pfam" id="PF00488">
    <property type="entry name" value="MutS_V"/>
    <property type="match status" value="1"/>
</dbReference>
<dbReference type="PIRSF" id="PIRSF037677">
    <property type="entry name" value="DNA_mis_repair_Msh6"/>
    <property type="match status" value="1"/>
</dbReference>
<dbReference type="SMART" id="SM00534">
    <property type="entry name" value="MUTSac"/>
    <property type="match status" value="1"/>
</dbReference>
<dbReference type="SMART" id="SM00533">
    <property type="entry name" value="MUTSd"/>
    <property type="match status" value="1"/>
</dbReference>
<dbReference type="SUPFAM" id="SSF55271">
    <property type="entry name" value="DNA repair protein MutS, domain I"/>
    <property type="match status" value="1"/>
</dbReference>
<dbReference type="SUPFAM" id="SSF53150">
    <property type="entry name" value="DNA repair protein MutS, domain II"/>
    <property type="match status" value="1"/>
</dbReference>
<dbReference type="SUPFAM" id="SSF48334">
    <property type="entry name" value="DNA repair protein MutS, domain III"/>
    <property type="match status" value="1"/>
</dbReference>
<dbReference type="SUPFAM" id="SSF52540">
    <property type="entry name" value="P-loop containing nucleoside triphosphate hydrolases"/>
    <property type="match status" value="1"/>
</dbReference>
<dbReference type="PROSITE" id="PS00486">
    <property type="entry name" value="DNA_MISMATCH_REPAIR_2"/>
    <property type="match status" value="1"/>
</dbReference>
<evidence type="ECO:0000255" key="1">
    <source>
        <dbReference type="HAMAP-Rule" id="MF_00096"/>
    </source>
</evidence>
<evidence type="ECO:0000305" key="2"/>
<accession>A5FJ63</accession>
<sequence>MAAKEKVAKETPLMKQYNEIKRKYPDACLLFRVGDFYETFGEDAIRASKILGITLTKRGAGSDTETALAGFPHHSINTYLPKLVKAGLRVAICDQLEDPKMTKTIVKRGVTELVTPGVSLNDEVLQSKTNNFLASVCFANKNIGISFLDVSTGEFLTAQGNAEYIDKLLQNFNPSEVLVPKNCKSEFKDAFGEDFHSFYLEDWIYKEDYALETLTKHFQTNSLKGFGVEELKEGIISAGAILYYLSETQHNRVQHITAIQRIAEDAYVWMDRFTIRNLELYHSYNPNAVTLLDVIDKTLSPMGGRLLKRWLALPLKDTNKIKGRHAVVSYLKSNPEILHNIQYQIKQISDLERLISKIAAGKVSPREIVYLKESLDAIIPIKTLALESPQEAVKVIGDSLHSCDLLREKIKTTLNQDAPVAISKGNAIATGVNEELDELRAISTSGKEFLEGIERRESERTGISSLKISFNNVFGYYIEVRNTHKDKVPEEWIRKQTLVNAERYITEELKEYETKILGAEEKIHKIESELFEQLVNWIATYIKPVQMNAYLVAQLDCLCSFTQMAVENQYVCPEIDDTFELDIKNGRHPVIEKQLPVGTPYIANDVFLDREKQQIIMITGPNMSGKSAILRQTALIVLLAQMGSFVPADSVRMGIVDKIFTRVGASDNISMGESTFMVEMNETASILNNISDRSLVLLDEIGRGTSTYDGISIAWAIAEFLHEHPSKAKTLFATHYHELNEMTESLPRIQNYNVAVKELKDTVLFVRKLVKGGSAHSFGIHVAKMAGMPQLVISKAQKLLKKLEKNHSSDALNGIKSANDEMQMSFFNLDDPLLEEIKEEILSLDINAITPVEALMKLNEIKRMLVKK</sequence>
<keyword id="KW-0067">ATP-binding</keyword>
<keyword id="KW-0227">DNA damage</keyword>
<keyword id="KW-0234">DNA repair</keyword>
<keyword id="KW-0238">DNA-binding</keyword>
<keyword id="KW-0547">Nucleotide-binding</keyword>
<organism>
    <name type="scientific">Flavobacterium johnsoniae (strain ATCC 17061 / DSM 2064 / JCM 8514 / BCRC 14874 / CCUG 350202 / NBRC 14942 / NCIMB 11054 / UW101)</name>
    <name type="common">Cytophaga johnsonae</name>
    <dbReference type="NCBI Taxonomy" id="376686"/>
    <lineage>
        <taxon>Bacteria</taxon>
        <taxon>Pseudomonadati</taxon>
        <taxon>Bacteroidota</taxon>
        <taxon>Flavobacteriia</taxon>
        <taxon>Flavobacteriales</taxon>
        <taxon>Flavobacteriaceae</taxon>
        <taxon>Flavobacterium</taxon>
    </lineage>
</organism>
<reference key="1">
    <citation type="journal article" date="2009" name="Appl. Environ. Microbiol.">
        <title>Novel features of the polysaccharide-digesting gliding bacterium Flavobacterium johnsoniae as revealed by genome sequence analysis.</title>
        <authorList>
            <person name="McBride M.J."/>
            <person name="Xie G."/>
            <person name="Martens E.C."/>
            <person name="Lapidus A."/>
            <person name="Henrissat B."/>
            <person name="Rhodes R.G."/>
            <person name="Goltsman E."/>
            <person name="Wang W."/>
            <person name="Xu J."/>
            <person name="Hunnicutt D.W."/>
            <person name="Staroscik A.M."/>
            <person name="Hoover T.R."/>
            <person name="Cheng Y.Q."/>
            <person name="Stein J.L."/>
        </authorList>
    </citation>
    <scope>NUCLEOTIDE SEQUENCE [LARGE SCALE GENOMIC DNA]</scope>
    <source>
        <strain>ATCC 17061 / DSM 2064 / JCM 8514 / BCRC 14874 / CCUG 350202 / NBRC 14942 / NCIMB 11054 / UW101</strain>
    </source>
</reference>
<name>MUTS_FLAJ1</name>